<organism>
    <name type="scientific">Escherichia coli O1:K1 / APEC</name>
    <dbReference type="NCBI Taxonomy" id="405955"/>
    <lineage>
        <taxon>Bacteria</taxon>
        <taxon>Pseudomonadati</taxon>
        <taxon>Pseudomonadota</taxon>
        <taxon>Gammaproteobacteria</taxon>
        <taxon>Enterobacterales</taxon>
        <taxon>Enterobacteriaceae</taxon>
        <taxon>Escherichia</taxon>
    </lineage>
</organism>
<sequence>MANELTWHDVLAEEKQQPYFLNTLQTVASERQSGVTIYPPQKDVFNAFRFTELGDVKVVILGQDPYHGPGQAHGLAFSVRPGIATPPSLLNMYKELENTIPGFTRPNHGYLESWARQGVLLLNTVLTVRAGQAHSHASLGWETFTDKVISLINQHREGVVFLLWGSHAQKKGAIIDKQRHHVLKAPHPSPLSAHRGFFGCNHFVLANQWLEQRGETPIDWMPVLPAESE</sequence>
<comment type="function">
    <text evidence="1">Excises uracil residues from the DNA which can arise as a result of misincorporation of dUMP residues by DNA polymerase or due to deamination of cytosine.</text>
</comment>
<comment type="catalytic activity">
    <reaction evidence="1">
        <text>Hydrolyzes single-stranded DNA or mismatched double-stranded DNA and polynucleotides, releasing free uracil.</text>
        <dbReference type="EC" id="3.2.2.27"/>
    </reaction>
</comment>
<comment type="subcellular location">
    <subcellularLocation>
        <location evidence="1">Cytoplasm</location>
    </subcellularLocation>
</comment>
<comment type="similarity">
    <text evidence="1">Belongs to the uracil-DNA glycosylase (UDG) superfamily. UNG family.</text>
</comment>
<name>UNG_ECOK1</name>
<reference key="1">
    <citation type="journal article" date="2007" name="J. Bacteriol.">
        <title>The genome sequence of avian pathogenic Escherichia coli strain O1:K1:H7 shares strong similarities with human extraintestinal pathogenic E. coli genomes.</title>
        <authorList>
            <person name="Johnson T.J."/>
            <person name="Kariyawasam S."/>
            <person name="Wannemuehler Y."/>
            <person name="Mangiamele P."/>
            <person name="Johnson S.J."/>
            <person name="Doetkott C."/>
            <person name="Skyberg J.A."/>
            <person name="Lynne A.M."/>
            <person name="Johnson J.R."/>
            <person name="Nolan L.K."/>
        </authorList>
    </citation>
    <scope>NUCLEOTIDE SEQUENCE [LARGE SCALE GENOMIC DNA]</scope>
</reference>
<dbReference type="EC" id="3.2.2.27" evidence="1"/>
<dbReference type="EMBL" id="CP000468">
    <property type="protein sequence ID" value="ABJ02000.1"/>
    <property type="molecule type" value="Genomic_DNA"/>
</dbReference>
<dbReference type="RefSeq" id="WP_001262723.1">
    <property type="nucleotide sequence ID" value="NZ_CADILS010000012.1"/>
</dbReference>
<dbReference type="SMR" id="A1AEB0"/>
<dbReference type="GeneID" id="75206274"/>
<dbReference type="KEGG" id="ecv:APECO1_3952"/>
<dbReference type="HOGENOM" id="CLU_032162_3_0_6"/>
<dbReference type="Proteomes" id="UP000008216">
    <property type="component" value="Chromosome"/>
</dbReference>
<dbReference type="GO" id="GO:0005737">
    <property type="term" value="C:cytoplasm"/>
    <property type="evidence" value="ECO:0007669"/>
    <property type="project" value="UniProtKB-SubCell"/>
</dbReference>
<dbReference type="GO" id="GO:0004844">
    <property type="term" value="F:uracil DNA N-glycosylase activity"/>
    <property type="evidence" value="ECO:0007669"/>
    <property type="project" value="UniProtKB-UniRule"/>
</dbReference>
<dbReference type="GO" id="GO:0097510">
    <property type="term" value="P:base-excision repair, AP site formation via deaminated base removal"/>
    <property type="evidence" value="ECO:0007669"/>
    <property type="project" value="TreeGrafter"/>
</dbReference>
<dbReference type="CDD" id="cd10027">
    <property type="entry name" value="UDG-F1-like"/>
    <property type="match status" value="1"/>
</dbReference>
<dbReference type="FunFam" id="3.40.470.10:FF:000001">
    <property type="entry name" value="Uracil-DNA glycosylase"/>
    <property type="match status" value="1"/>
</dbReference>
<dbReference type="Gene3D" id="3.40.470.10">
    <property type="entry name" value="Uracil-DNA glycosylase-like domain"/>
    <property type="match status" value="1"/>
</dbReference>
<dbReference type="HAMAP" id="MF_00148">
    <property type="entry name" value="UDG"/>
    <property type="match status" value="1"/>
</dbReference>
<dbReference type="InterPro" id="IPR002043">
    <property type="entry name" value="UDG_fam1"/>
</dbReference>
<dbReference type="InterPro" id="IPR018085">
    <property type="entry name" value="Ura-DNA_Glyclase_AS"/>
</dbReference>
<dbReference type="InterPro" id="IPR005122">
    <property type="entry name" value="Uracil-DNA_glycosylase-like"/>
</dbReference>
<dbReference type="InterPro" id="IPR036895">
    <property type="entry name" value="Uracil-DNA_glycosylase-like_sf"/>
</dbReference>
<dbReference type="NCBIfam" id="NF003588">
    <property type="entry name" value="PRK05254.1-1"/>
    <property type="match status" value="1"/>
</dbReference>
<dbReference type="NCBIfam" id="NF003589">
    <property type="entry name" value="PRK05254.1-2"/>
    <property type="match status" value="1"/>
</dbReference>
<dbReference type="NCBIfam" id="NF003591">
    <property type="entry name" value="PRK05254.1-4"/>
    <property type="match status" value="1"/>
</dbReference>
<dbReference type="NCBIfam" id="NF003592">
    <property type="entry name" value="PRK05254.1-5"/>
    <property type="match status" value="1"/>
</dbReference>
<dbReference type="NCBIfam" id="TIGR00628">
    <property type="entry name" value="ung"/>
    <property type="match status" value="1"/>
</dbReference>
<dbReference type="PANTHER" id="PTHR11264">
    <property type="entry name" value="URACIL-DNA GLYCOSYLASE"/>
    <property type="match status" value="1"/>
</dbReference>
<dbReference type="PANTHER" id="PTHR11264:SF0">
    <property type="entry name" value="URACIL-DNA GLYCOSYLASE"/>
    <property type="match status" value="1"/>
</dbReference>
<dbReference type="Pfam" id="PF03167">
    <property type="entry name" value="UDG"/>
    <property type="match status" value="1"/>
</dbReference>
<dbReference type="SMART" id="SM00986">
    <property type="entry name" value="UDG"/>
    <property type="match status" value="1"/>
</dbReference>
<dbReference type="SMART" id="SM00987">
    <property type="entry name" value="UreE_C"/>
    <property type="match status" value="1"/>
</dbReference>
<dbReference type="SUPFAM" id="SSF52141">
    <property type="entry name" value="Uracil-DNA glycosylase-like"/>
    <property type="match status" value="1"/>
</dbReference>
<dbReference type="PROSITE" id="PS00130">
    <property type="entry name" value="U_DNA_GLYCOSYLASE"/>
    <property type="match status" value="1"/>
</dbReference>
<keyword id="KW-0963">Cytoplasm</keyword>
<keyword id="KW-0227">DNA damage</keyword>
<keyword id="KW-0234">DNA repair</keyword>
<keyword id="KW-0378">Hydrolase</keyword>
<keyword id="KW-1185">Reference proteome</keyword>
<gene>
    <name evidence="1" type="primary">ung</name>
    <name type="ordered locus">Ecok1_25060</name>
    <name type="ORF">APECO1_3952</name>
</gene>
<accession>A1AEB0</accession>
<proteinExistence type="inferred from homology"/>
<evidence type="ECO:0000255" key="1">
    <source>
        <dbReference type="HAMAP-Rule" id="MF_00148"/>
    </source>
</evidence>
<protein>
    <recommendedName>
        <fullName evidence="1">Uracil-DNA glycosylase</fullName>
        <shortName evidence="1">UDG</shortName>
        <ecNumber evidence="1">3.2.2.27</ecNumber>
    </recommendedName>
</protein>
<feature type="chain" id="PRO_1000009885" description="Uracil-DNA glycosylase">
    <location>
        <begin position="1"/>
        <end position="229"/>
    </location>
</feature>
<feature type="active site" description="Proton acceptor" evidence="1">
    <location>
        <position position="64"/>
    </location>
</feature>